<proteinExistence type="inferred from homology"/>
<protein>
    <recommendedName>
        <fullName evidence="1">GPN-loop GTPase 2</fullName>
        <ecNumber evidence="1">3.6.5.-</ecNumber>
    </recommendedName>
    <alternativeName>
        <fullName evidence="2">ATP-binding domain 1 family member B homolog</fullName>
    </alternativeName>
</protein>
<gene>
    <name evidence="1" type="primary">gpn2</name>
    <name evidence="6" type="ORF">SPAC144.07c</name>
</gene>
<comment type="function">
    <text evidence="1">Small GTPase required for proper nuclear import of RNA polymerase II and III (RNAPII and RNAPIII). May act at an RNAP assembly step prior to nuclear import.</text>
</comment>
<comment type="subunit">
    <text evidence="1">Heterodimers with gpn1 or fet5/gpn3. Binds to RNA polymerase II (RNAPII).</text>
</comment>
<comment type="subcellular location">
    <subcellularLocation>
        <location evidence="4">Cytoplasm</location>
    </subcellularLocation>
    <subcellularLocation>
        <location evidence="4">Nucleus</location>
    </subcellularLocation>
</comment>
<comment type="similarity">
    <text evidence="5">Belongs to the GPN-loop GTPase family.</text>
</comment>
<dbReference type="EC" id="3.6.5.-" evidence="1"/>
<dbReference type="EMBL" id="CU329670">
    <property type="protein sequence ID" value="CAB59687.1"/>
    <property type="molecule type" value="Genomic_DNA"/>
</dbReference>
<dbReference type="PIR" id="T37674">
    <property type="entry name" value="T37674"/>
</dbReference>
<dbReference type="RefSeq" id="NP_594668.1">
    <property type="nucleotide sequence ID" value="NM_001020097.2"/>
</dbReference>
<dbReference type="SMR" id="Q9UTL7"/>
<dbReference type="BioGRID" id="279343">
    <property type="interactions" value="2"/>
</dbReference>
<dbReference type="FunCoup" id="Q9UTL7">
    <property type="interactions" value="759"/>
</dbReference>
<dbReference type="STRING" id="284812.Q9UTL7"/>
<dbReference type="PaxDb" id="4896-SPAC144.07c.1"/>
<dbReference type="EnsemblFungi" id="SPAC144.07c.1">
    <property type="protein sequence ID" value="SPAC144.07c.1:pep"/>
    <property type="gene ID" value="SPAC144.07c"/>
</dbReference>
<dbReference type="GeneID" id="2542899"/>
<dbReference type="KEGG" id="spo:2542899"/>
<dbReference type="PomBase" id="SPAC144.07c">
    <property type="gene designation" value="gpn2"/>
</dbReference>
<dbReference type="VEuPathDB" id="FungiDB:SPAC144.07c"/>
<dbReference type="eggNOG" id="KOG1533">
    <property type="taxonomic scope" value="Eukaryota"/>
</dbReference>
<dbReference type="HOGENOM" id="CLU_037460_0_2_1"/>
<dbReference type="InParanoid" id="Q9UTL7"/>
<dbReference type="OMA" id="ATHNYFL"/>
<dbReference type="PhylomeDB" id="Q9UTL7"/>
<dbReference type="PRO" id="PR:Q9UTL7"/>
<dbReference type="Proteomes" id="UP000002485">
    <property type="component" value="Chromosome I"/>
</dbReference>
<dbReference type="GO" id="GO:0005737">
    <property type="term" value="C:cytoplasm"/>
    <property type="evidence" value="ECO:0007005"/>
    <property type="project" value="PomBase"/>
</dbReference>
<dbReference type="GO" id="GO:0005829">
    <property type="term" value="C:cytosol"/>
    <property type="evidence" value="ECO:0007005"/>
    <property type="project" value="PomBase"/>
</dbReference>
<dbReference type="GO" id="GO:0005634">
    <property type="term" value="C:nucleus"/>
    <property type="evidence" value="ECO:0007005"/>
    <property type="project" value="PomBase"/>
</dbReference>
<dbReference type="GO" id="GO:0005525">
    <property type="term" value="F:GTP binding"/>
    <property type="evidence" value="ECO:0007669"/>
    <property type="project" value="UniProtKB-KW"/>
</dbReference>
<dbReference type="GO" id="GO:0003924">
    <property type="term" value="F:GTPase activity"/>
    <property type="evidence" value="ECO:0000318"/>
    <property type="project" value="GO_Central"/>
</dbReference>
<dbReference type="GO" id="GO:0006606">
    <property type="term" value="P:protein import into nucleus"/>
    <property type="evidence" value="ECO:0000266"/>
    <property type="project" value="PomBase"/>
</dbReference>
<dbReference type="CDD" id="cd17871">
    <property type="entry name" value="GPN2"/>
    <property type="match status" value="1"/>
</dbReference>
<dbReference type="FunFam" id="3.40.50.300:FF:000338">
    <property type="entry name" value="GPN-loop GTPase 2"/>
    <property type="match status" value="1"/>
</dbReference>
<dbReference type="Gene3D" id="3.40.50.300">
    <property type="entry name" value="P-loop containing nucleotide triphosphate hydrolases"/>
    <property type="match status" value="1"/>
</dbReference>
<dbReference type="InterPro" id="IPR004130">
    <property type="entry name" value="Gpn"/>
</dbReference>
<dbReference type="InterPro" id="IPR030231">
    <property type="entry name" value="Gpn2"/>
</dbReference>
<dbReference type="InterPro" id="IPR027417">
    <property type="entry name" value="P-loop_NTPase"/>
</dbReference>
<dbReference type="PANTHER" id="PTHR21231:SF3">
    <property type="entry name" value="GPN-LOOP GTPASE 2"/>
    <property type="match status" value="1"/>
</dbReference>
<dbReference type="PANTHER" id="PTHR21231">
    <property type="entry name" value="XPA-BINDING PROTEIN 1-RELATED"/>
    <property type="match status" value="1"/>
</dbReference>
<dbReference type="Pfam" id="PF03029">
    <property type="entry name" value="ATP_bind_1"/>
    <property type="match status" value="1"/>
</dbReference>
<dbReference type="SUPFAM" id="SSF52540">
    <property type="entry name" value="P-loop containing nucleoside triphosphate hydrolases"/>
    <property type="match status" value="1"/>
</dbReference>
<name>GPN2_SCHPO</name>
<reference key="1">
    <citation type="journal article" date="2002" name="Nature">
        <title>The genome sequence of Schizosaccharomyces pombe.</title>
        <authorList>
            <person name="Wood V."/>
            <person name="Gwilliam R."/>
            <person name="Rajandream M.A."/>
            <person name="Lyne M.H."/>
            <person name="Lyne R."/>
            <person name="Stewart A."/>
            <person name="Sgouros J.G."/>
            <person name="Peat N."/>
            <person name="Hayles J."/>
            <person name="Baker S.G."/>
            <person name="Basham D."/>
            <person name="Bowman S."/>
            <person name="Brooks K."/>
            <person name="Brown D."/>
            <person name="Brown S."/>
            <person name="Chillingworth T."/>
            <person name="Churcher C.M."/>
            <person name="Collins M."/>
            <person name="Connor R."/>
            <person name="Cronin A."/>
            <person name="Davis P."/>
            <person name="Feltwell T."/>
            <person name="Fraser A."/>
            <person name="Gentles S."/>
            <person name="Goble A."/>
            <person name="Hamlin N."/>
            <person name="Harris D.E."/>
            <person name="Hidalgo J."/>
            <person name="Hodgson G."/>
            <person name="Holroyd S."/>
            <person name="Hornsby T."/>
            <person name="Howarth S."/>
            <person name="Huckle E.J."/>
            <person name="Hunt S."/>
            <person name="Jagels K."/>
            <person name="James K.D."/>
            <person name="Jones L."/>
            <person name="Jones M."/>
            <person name="Leather S."/>
            <person name="McDonald S."/>
            <person name="McLean J."/>
            <person name="Mooney P."/>
            <person name="Moule S."/>
            <person name="Mungall K.L."/>
            <person name="Murphy L.D."/>
            <person name="Niblett D."/>
            <person name="Odell C."/>
            <person name="Oliver K."/>
            <person name="O'Neil S."/>
            <person name="Pearson D."/>
            <person name="Quail M.A."/>
            <person name="Rabbinowitsch E."/>
            <person name="Rutherford K.M."/>
            <person name="Rutter S."/>
            <person name="Saunders D."/>
            <person name="Seeger K."/>
            <person name="Sharp S."/>
            <person name="Skelton J."/>
            <person name="Simmonds M.N."/>
            <person name="Squares R."/>
            <person name="Squares S."/>
            <person name="Stevens K."/>
            <person name="Taylor K."/>
            <person name="Taylor R.G."/>
            <person name="Tivey A."/>
            <person name="Walsh S.V."/>
            <person name="Warren T."/>
            <person name="Whitehead S."/>
            <person name="Woodward J.R."/>
            <person name="Volckaert G."/>
            <person name="Aert R."/>
            <person name="Robben J."/>
            <person name="Grymonprez B."/>
            <person name="Weltjens I."/>
            <person name="Vanstreels E."/>
            <person name="Rieger M."/>
            <person name="Schaefer M."/>
            <person name="Mueller-Auer S."/>
            <person name="Gabel C."/>
            <person name="Fuchs M."/>
            <person name="Duesterhoeft A."/>
            <person name="Fritzc C."/>
            <person name="Holzer E."/>
            <person name="Moestl D."/>
            <person name="Hilbert H."/>
            <person name="Borzym K."/>
            <person name="Langer I."/>
            <person name="Beck A."/>
            <person name="Lehrach H."/>
            <person name="Reinhardt R."/>
            <person name="Pohl T.M."/>
            <person name="Eger P."/>
            <person name="Zimmermann W."/>
            <person name="Wedler H."/>
            <person name="Wambutt R."/>
            <person name="Purnelle B."/>
            <person name="Goffeau A."/>
            <person name="Cadieu E."/>
            <person name="Dreano S."/>
            <person name="Gloux S."/>
            <person name="Lelaure V."/>
            <person name="Mottier S."/>
            <person name="Galibert F."/>
            <person name="Aves S.J."/>
            <person name="Xiang Z."/>
            <person name="Hunt C."/>
            <person name="Moore K."/>
            <person name="Hurst S.M."/>
            <person name="Lucas M."/>
            <person name="Rochet M."/>
            <person name="Gaillardin C."/>
            <person name="Tallada V.A."/>
            <person name="Garzon A."/>
            <person name="Thode G."/>
            <person name="Daga R.R."/>
            <person name="Cruzado L."/>
            <person name="Jimenez J."/>
            <person name="Sanchez M."/>
            <person name="del Rey F."/>
            <person name="Benito J."/>
            <person name="Dominguez A."/>
            <person name="Revuelta J.L."/>
            <person name="Moreno S."/>
            <person name="Armstrong J."/>
            <person name="Forsburg S.L."/>
            <person name="Cerutti L."/>
            <person name="Lowe T."/>
            <person name="McCombie W.R."/>
            <person name="Paulsen I."/>
            <person name="Potashkin J."/>
            <person name="Shpakovski G.V."/>
            <person name="Ussery D."/>
            <person name="Barrell B.G."/>
            <person name="Nurse P."/>
        </authorList>
    </citation>
    <scope>NUCLEOTIDE SEQUENCE [LARGE SCALE GENOMIC DNA]</scope>
    <source>
        <strain>972 / ATCC 24843</strain>
    </source>
</reference>
<reference key="2">
    <citation type="journal article" date="2006" name="Nat. Biotechnol.">
        <title>ORFeome cloning and global analysis of protein localization in the fission yeast Schizosaccharomyces pombe.</title>
        <authorList>
            <person name="Matsuyama A."/>
            <person name="Arai R."/>
            <person name="Yashiroda Y."/>
            <person name="Shirai A."/>
            <person name="Kamata A."/>
            <person name="Sekido S."/>
            <person name="Kobayashi Y."/>
            <person name="Hashimoto A."/>
            <person name="Hamamoto M."/>
            <person name="Hiraoka Y."/>
            <person name="Horinouchi S."/>
            <person name="Yoshida M."/>
        </authorList>
    </citation>
    <scope>SUBCELLULAR LOCATION [LARGE SCALE ANALYSIS]</scope>
</reference>
<organism>
    <name type="scientific">Schizosaccharomyces pombe (strain 972 / ATCC 24843)</name>
    <name type="common">Fission yeast</name>
    <dbReference type="NCBI Taxonomy" id="284812"/>
    <lineage>
        <taxon>Eukaryota</taxon>
        <taxon>Fungi</taxon>
        <taxon>Dikarya</taxon>
        <taxon>Ascomycota</taxon>
        <taxon>Taphrinomycotina</taxon>
        <taxon>Schizosaccharomycetes</taxon>
        <taxon>Schizosaccharomycetales</taxon>
        <taxon>Schizosaccharomycetaceae</taxon>
        <taxon>Schizosaccharomyces</taxon>
    </lineage>
</organism>
<keyword id="KW-0963">Cytoplasm</keyword>
<keyword id="KW-0342">GTP-binding</keyword>
<keyword id="KW-0378">Hydrolase</keyword>
<keyword id="KW-0547">Nucleotide-binding</keyword>
<keyword id="KW-0539">Nucleus</keyword>
<keyword id="KW-1185">Reference proteome</keyword>
<feature type="chain" id="PRO_0000315978" description="GPN-loop GTPase 2">
    <location>
        <begin position="1"/>
        <end position="315"/>
    </location>
</feature>
<feature type="short sequence motif" description="Gly-Pro-Asn (GPN)-loop; involved in dimer interface" evidence="3">
    <location>
        <begin position="69"/>
        <end position="71"/>
    </location>
</feature>
<feature type="binding site" evidence="3">
    <location>
        <begin position="12"/>
        <end position="17"/>
    </location>
    <ligand>
        <name>GTP</name>
        <dbReference type="ChEBI" id="CHEBI:37565"/>
    </ligand>
</feature>
<feature type="binding site" evidence="3">
    <location>
        <begin position="172"/>
        <end position="175"/>
    </location>
    <ligand>
        <name>GTP</name>
        <dbReference type="ChEBI" id="CHEBI:37565"/>
    </ligand>
</feature>
<feature type="site" description="Stabilizes the phosphate intermediate; shared with dimeric partner" evidence="3">
    <location>
        <position position="71"/>
    </location>
</feature>
<evidence type="ECO:0000250" key="1">
    <source>
        <dbReference type="UniProtKB" id="Q08726"/>
    </source>
</evidence>
<evidence type="ECO:0000250" key="2">
    <source>
        <dbReference type="UniProtKB" id="Q9H9Y4"/>
    </source>
</evidence>
<evidence type="ECO:0000250" key="3">
    <source>
        <dbReference type="UniProtKB" id="Q9UYR9"/>
    </source>
</evidence>
<evidence type="ECO:0000269" key="4">
    <source>
    </source>
</evidence>
<evidence type="ECO:0000305" key="5"/>
<evidence type="ECO:0000312" key="6">
    <source>
        <dbReference type="PomBase" id="SPAC144.07c"/>
    </source>
</evidence>
<sequence>MPFCQVVVGPPGSGKSTYCFGMYQLLSAIGRSSIIVNLDPANDFIKYPCAIDIRKVLDVEMIQKDYDLGPNGALIYAMEAIEYHVEWLLKELKKHRDSYVIFDCPGQVELFTNHNSLQKIIKTLEKELDYRPVSVQLVDAYCCTNPSAYVSALLVCLKGMLQLDMPHVNILSKADLLCTYGTLPMKLDFFTEVQDLSYLAPLLDRDKRLQRYSDLNKAICELVEDFNLVSFEVVAVENKASMLRVLRKIDQAGGYAYGSTEIGGDAVWVNAVRQGGDPLQGISPQERWIDKKEEYDKYEWELEQKSTMDEDENEG</sequence>
<accession>Q9UTL7</accession>